<accession>A4THL5</accession>
<proteinExistence type="inferred from homology"/>
<sequence length="129" mass="14667">MINFRGRFGRPLWHYLVLPVVLLLLAVILLTPMIVQTESTLKIRPNQQGLSLPDGFYLYQHLNGRGIHIKSIIPENDSLVVSLEFPEQQMQAIEVLQDVLPAGYAIVASESKKRHRLLPVFRSNQQNLG</sequence>
<name>MZRA_YERPP</name>
<feature type="chain" id="PRO_0000413196" description="Modulator protein MzrA">
    <location>
        <begin position="1"/>
        <end position="129"/>
    </location>
</feature>
<feature type="topological domain" description="Cytoplasmic" evidence="1">
    <location>
        <begin position="1"/>
        <end position="14"/>
    </location>
</feature>
<feature type="transmembrane region" description="Helical" evidence="1">
    <location>
        <begin position="15"/>
        <end position="35"/>
    </location>
</feature>
<feature type="topological domain" description="Periplasmic" evidence="1">
    <location>
        <begin position="36"/>
        <end position="129"/>
    </location>
</feature>
<reference key="1">
    <citation type="submission" date="2007-02" db="EMBL/GenBank/DDBJ databases">
        <title>Complete sequence of chromosome of Yersinia pestis Pestoides F.</title>
        <authorList>
            <consortium name="US DOE Joint Genome Institute"/>
            <person name="Copeland A."/>
            <person name="Lucas S."/>
            <person name="Lapidus A."/>
            <person name="Barry K."/>
            <person name="Detter J.C."/>
            <person name="Glavina del Rio T."/>
            <person name="Hammon N."/>
            <person name="Israni S."/>
            <person name="Dalin E."/>
            <person name="Tice H."/>
            <person name="Pitluck S."/>
            <person name="Di Bartolo G."/>
            <person name="Chain P."/>
            <person name="Malfatti S."/>
            <person name="Shin M."/>
            <person name="Vergez L."/>
            <person name="Schmutz J."/>
            <person name="Larimer F."/>
            <person name="Land M."/>
            <person name="Hauser L."/>
            <person name="Worsham P."/>
            <person name="Chu M."/>
            <person name="Bearden S."/>
            <person name="Garcia E."/>
            <person name="Richardson P."/>
        </authorList>
    </citation>
    <scope>NUCLEOTIDE SEQUENCE [LARGE SCALE GENOMIC DNA]</scope>
    <source>
        <strain>Pestoides F</strain>
    </source>
</reference>
<dbReference type="EMBL" id="CP000668">
    <property type="protein sequence ID" value="ABP38777.1"/>
    <property type="molecule type" value="Genomic_DNA"/>
</dbReference>
<dbReference type="RefSeq" id="WP_002210415.1">
    <property type="nucleotide sequence ID" value="NZ_CP009715.1"/>
</dbReference>
<dbReference type="SMR" id="A4THL5"/>
<dbReference type="GeneID" id="57974042"/>
<dbReference type="KEGG" id="ypp:YPDSF_0360"/>
<dbReference type="PATRIC" id="fig|386656.14.peg.1662"/>
<dbReference type="GO" id="GO:0005886">
    <property type="term" value="C:plasma membrane"/>
    <property type="evidence" value="ECO:0007669"/>
    <property type="project" value="UniProtKB-SubCell"/>
</dbReference>
<dbReference type="GO" id="GO:0019901">
    <property type="term" value="F:protein kinase binding"/>
    <property type="evidence" value="ECO:0007669"/>
    <property type="project" value="UniProtKB-UniRule"/>
</dbReference>
<dbReference type="Gene3D" id="3.30.70.260">
    <property type="match status" value="1"/>
</dbReference>
<dbReference type="HAMAP" id="MF_00904">
    <property type="entry name" value="Modulator_MzrA"/>
    <property type="match status" value="1"/>
</dbReference>
<dbReference type="InterPro" id="IPR026574">
    <property type="entry name" value="Modulator_MzrA"/>
</dbReference>
<dbReference type="InterPro" id="IPR027398">
    <property type="entry name" value="SecD-TM"/>
</dbReference>
<dbReference type="NCBIfam" id="NF007915">
    <property type="entry name" value="PRK10629.1"/>
    <property type="match status" value="1"/>
</dbReference>
<dbReference type="Pfam" id="PF13721">
    <property type="entry name" value="SecD-TM1"/>
    <property type="match status" value="1"/>
</dbReference>
<evidence type="ECO:0000255" key="1">
    <source>
        <dbReference type="HAMAP-Rule" id="MF_00904"/>
    </source>
</evidence>
<gene>
    <name evidence="1" type="primary">mzrA</name>
    <name type="ordered locus">YPDSF_0360</name>
</gene>
<keyword id="KW-0997">Cell inner membrane</keyword>
<keyword id="KW-1003">Cell membrane</keyword>
<keyword id="KW-0472">Membrane</keyword>
<keyword id="KW-0812">Transmembrane</keyword>
<keyword id="KW-1133">Transmembrane helix</keyword>
<protein>
    <recommendedName>
        <fullName evidence="1">Modulator protein MzrA</fullName>
    </recommendedName>
</protein>
<comment type="function">
    <text evidence="1">Modulates the activity of the EnvZ/OmpR two-component regulatory system, probably by directly modulating EnvZ enzymatic activity and increasing stability of phosphorylated OmpR.</text>
</comment>
<comment type="subunit">
    <text evidence="1">Interacts with EnvZ.</text>
</comment>
<comment type="subcellular location">
    <subcellularLocation>
        <location evidence="1">Cell inner membrane</location>
        <topology evidence="1">Single-pass membrane protein</topology>
    </subcellularLocation>
</comment>
<comment type="similarity">
    <text evidence="1">Belongs to the MzrA family.</text>
</comment>
<organism>
    <name type="scientific">Yersinia pestis (strain Pestoides F)</name>
    <dbReference type="NCBI Taxonomy" id="386656"/>
    <lineage>
        <taxon>Bacteria</taxon>
        <taxon>Pseudomonadati</taxon>
        <taxon>Pseudomonadota</taxon>
        <taxon>Gammaproteobacteria</taxon>
        <taxon>Enterobacterales</taxon>
        <taxon>Yersiniaceae</taxon>
        <taxon>Yersinia</taxon>
    </lineage>
</organism>